<organism>
    <name type="scientific">Xylella fastidiosa (strain Temecula1 / ATCC 700964)</name>
    <dbReference type="NCBI Taxonomy" id="183190"/>
    <lineage>
        <taxon>Bacteria</taxon>
        <taxon>Pseudomonadati</taxon>
        <taxon>Pseudomonadota</taxon>
        <taxon>Gammaproteobacteria</taxon>
        <taxon>Lysobacterales</taxon>
        <taxon>Lysobacteraceae</taxon>
        <taxon>Xylella</taxon>
    </lineage>
</organism>
<keyword id="KW-0963">Cytoplasm</keyword>
<keyword id="KW-0489">Methyltransferase</keyword>
<keyword id="KW-1185">Reference proteome</keyword>
<keyword id="KW-0698">rRNA processing</keyword>
<keyword id="KW-0949">S-adenosyl-L-methionine</keyword>
<keyword id="KW-0808">Transferase</keyword>
<name>RSMH_XYLFT</name>
<feature type="chain" id="PRO_0000108755" description="Ribosomal RNA small subunit methyltransferase H">
    <location>
        <begin position="1"/>
        <end position="313"/>
    </location>
</feature>
<feature type="binding site" evidence="1">
    <location>
        <begin position="31"/>
        <end position="33"/>
    </location>
    <ligand>
        <name>S-adenosyl-L-methionine</name>
        <dbReference type="ChEBI" id="CHEBI:59789"/>
    </ligand>
</feature>
<feature type="binding site" evidence="1">
    <location>
        <position position="51"/>
    </location>
    <ligand>
        <name>S-adenosyl-L-methionine</name>
        <dbReference type="ChEBI" id="CHEBI:59789"/>
    </ligand>
</feature>
<feature type="binding site" evidence="1">
    <location>
        <position position="77"/>
    </location>
    <ligand>
        <name>S-adenosyl-L-methionine</name>
        <dbReference type="ChEBI" id="CHEBI:59789"/>
    </ligand>
</feature>
<feature type="binding site" evidence="1">
    <location>
        <position position="95"/>
    </location>
    <ligand>
        <name>S-adenosyl-L-methionine</name>
        <dbReference type="ChEBI" id="CHEBI:59789"/>
    </ligand>
</feature>
<feature type="binding site" evidence="1">
    <location>
        <position position="102"/>
    </location>
    <ligand>
        <name>S-adenosyl-L-methionine</name>
        <dbReference type="ChEBI" id="CHEBI:59789"/>
    </ligand>
</feature>
<gene>
    <name evidence="1" type="primary">rsmH</name>
    <name type="synonym">mraW</name>
    <name type="ordered locus">PD_1873</name>
</gene>
<evidence type="ECO:0000255" key="1">
    <source>
        <dbReference type="HAMAP-Rule" id="MF_01007"/>
    </source>
</evidence>
<evidence type="ECO:0000305" key="2"/>
<comment type="function">
    <text evidence="1">Specifically methylates the N4 position of cytidine in position 1402 (C1402) of 16S rRNA.</text>
</comment>
<comment type="catalytic activity">
    <reaction evidence="1">
        <text>cytidine(1402) in 16S rRNA + S-adenosyl-L-methionine = N(4)-methylcytidine(1402) in 16S rRNA + S-adenosyl-L-homocysteine + H(+)</text>
        <dbReference type="Rhea" id="RHEA:42928"/>
        <dbReference type="Rhea" id="RHEA-COMP:10286"/>
        <dbReference type="Rhea" id="RHEA-COMP:10287"/>
        <dbReference type="ChEBI" id="CHEBI:15378"/>
        <dbReference type="ChEBI" id="CHEBI:57856"/>
        <dbReference type="ChEBI" id="CHEBI:59789"/>
        <dbReference type="ChEBI" id="CHEBI:74506"/>
        <dbReference type="ChEBI" id="CHEBI:82748"/>
        <dbReference type="EC" id="2.1.1.199"/>
    </reaction>
</comment>
<comment type="subcellular location">
    <subcellularLocation>
        <location evidence="1">Cytoplasm</location>
    </subcellularLocation>
</comment>
<comment type="similarity">
    <text evidence="1">Belongs to the methyltransferase superfamily. RsmH family.</text>
</comment>
<comment type="sequence caution" evidence="2">
    <conflict type="erroneous initiation">
        <sequence resource="EMBL-CDS" id="AAO29705"/>
    </conflict>
</comment>
<dbReference type="EC" id="2.1.1.199" evidence="1"/>
<dbReference type="EMBL" id="AE009442">
    <property type="protein sequence ID" value="AAO29705.1"/>
    <property type="status" value="ALT_INIT"/>
    <property type="molecule type" value="Genomic_DNA"/>
</dbReference>
<dbReference type="SMR" id="Q87AF2"/>
<dbReference type="KEGG" id="xft:PD_1873"/>
<dbReference type="HOGENOM" id="CLU_038422_3_0_6"/>
<dbReference type="Proteomes" id="UP000002516">
    <property type="component" value="Chromosome"/>
</dbReference>
<dbReference type="GO" id="GO:0005737">
    <property type="term" value="C:cytoplasm"/>
    <property type="evidence" value="ECO:0007669"/>
    <property type="project" value="UniProtKB-SubCell"/>
</dbReference>
<dbReference type="GO" id="GO:0071424">
    <property type="term" value="F:rRNA (cytosine-N4-)-methyltransferase activity"/>
    <property type="evidence" value="ECO:0007669"/>
    <property type="project" value="UniProtKB-UniRule"/>
</dbReference>
<dbReference type="GO" id="GO:0070475">
    <property type="term" value="P:rRNA base methylation"/>
    <property type="evidence" value="ECO:0007669"/>
    <property type="project" value="UniProtKB-UniRule"/>
</dbReference>
<dbReference type="Gene3D" id="1.10.150.170">
    <property type="entry name" value="Putative methyltransferase TM0872, insert domain"/>
    <property type="match status" value="1"/>
</dbReference>
<dbReference type="Gene3D" id="3.40.50.150">
    <property type="entry name" value="Vaccinia Virus protein VP39"/>
    <property type="match status" value="1"/>
</dbReference>
<dbReference type="HAMAP" id="MF_01007">
    <property type="entry name" value="16SrRNA_methyltr_H"/>
    <property type="match status" value="1"/>
</dbReference>
<dbReference type="InterPro" id="IPR002903">
    <property type="entry name" value="RsmH"/>
</dbReference>
<dbReference type="InterPro" id="IPR023397">
    <property type="entry name" value="SAM-dep_MeTrfase_MraW_recog"/>
</dbReference>
<dbReference type="InterPro" id="IPR029063">
    <property type="entry name" value="SAM-dependent_MTases_sf"/>
</dbReference>
<dbReference type="NCBIfam" id="TIGR00006">
    <property type="entry name" value="16S rRNA (cytosine(1402)-N(4))-methyltransferase RsmH"/>
    <property type="match status" value="1"/>
</dbReference>
<dbReference type="PANTHER" id="PTHR11265:SF0">
    <property type="entry name" value="12S RRNA N4-METHYLCYTIDINE METHYLTRANSFERASE"/>
    <property type="match status" value="1"/>
</dbReference>
<dbReference type="PANTHER" id="PTHR11265">
    <property type="entry name" value="S-ADENOSYL-METHYLTRANSFERASE MRAW"/>
    <property type="match status" value="1"/>
</dbReference>
<dbReference type="Pfam" id="PF01795">
    <property type="entry name" value="Methyltransf_5"/>
    <property type="match status" value="1"/>
</dbReference>
<dbReference type="PIRSF" id="PIRSF004486">
    <property type="entry name" value="MraW"/>
    <property type="match status" value="1"/>
</dbReference>
<dbReference type="SUPFAM" id="SSF81799">
    <property type="entry name" value="Putative methyltransferase TM0872, insert domain"/>
    <property type="match status" value="1"/>
</dbReference>
<dbReference type="SUPFAM" id="SSF53335">
    <property type="entry name" value="S-adenosyl-L-methionine-dependent methyltransferases"/>
    <property type="match status" value="1"/>
</dbReference>
<proteinExistence type="inferred from homology"/>
<sequence>MTHVPVLYTQAMEGLRVVENGTYLDGTFGRGGHARGVLQQLGPGGRLLVMDKDPEAIAMAERAFSCDPRVVIRHGSFALLAQLAAPQSLDGVLFDLGVSSPQLDVPERGFSFAKDGPLDMRMDPEMGESAAQWLARVSEREIADVLWTYGEEKQSRRIARAIVAYRANQPLLRTVQLAELIASVMLRTKFGACKSRIHPATRSFQGIRIHVNRELVDLEVGLEAALAALRPGGRLVVISFHSLEDRIVKQFISRHSKVPPTNRRLPEVQTFVPLLRMIGRAIKADEDELEVNPRARSAVLRVAEKLDVLGAVR</sequence>
<accession>Q87AF2</accession>
<reference key="1">
    <citation type="journal article" date="2003" name="J. Bacteriol.">
        <title>Comparative analyses of the complete genome sequences of Pierce's disease and citrus variegated chlorosis strains of Xylella fastidiosa.</title>
        <authorList>
            <person name="Van Sluys M.A."/>
            <person name="de Oliveira M.C."/>
            <person name="Monteiro-Vitorello C.B."/>
            <person name="Miyaki C.Y."/>
            <person name="Furlan L.R."/>
            <person name="Camargo L.E.A."/>
            <person name="da Silva A.C.R."/>
            <person name="Moon D.H."/>
            <person name="Takita M.A."/>
            <person name="Lemos E.G.M."/>
            <person name="Machado M.A."/>
            <person name="Ferro M.I.T."/>
            <person name="da Silva F.R."/>
            <person name="Goldman M.H.S."/>
            <person name="Goldman G.H."/>
            <person name="Lemos M.V.F."/>
            <person name="El-Dorry H."/>
            <person name="Tsai S.M."/>
            <person name="Carrer H."/>
            <person name="Carraro D.M."/>
            <person name="de Oliveira R.C."/>
            <person name="Nunes L.R."/>
            <person name="Siqueira W.J."/>
            <person name="Coutinho L.L."/>
            <person name="Kimura E.T."/>
            <person name="Ferro E.S."/>
            <person name="Harakava R."/>
            <person name="Kuramae E.E."/>
            <person name="Marino C.L."/>
            <person name="Giglioti E."/>
            <person name="Abreu I.L."/>
            <person name="Alves L.M.C."/>
            <person name="do Amaral A.M."/>
            <person name="Baia G.S."/>
            <person name="Blanco S.R."/>
            <person name="Brito M.S."/>
            <person name="Cannavan F.S."/>
            <person name="Celestino A.V."/>
            <person name="da Cunha A.F."/>
            <person name="Fenille R.C."/>
            <person name="Ferro J.A."/>
            <person name="Formighieri E.F."/>
            <person name="Kishi L.T."/>
            <person name="Leoni S.G."/>
            <person name="Oliveira A.R."/>
            <person name="Rosa V.E. Jr."/>
            <person name="Sassaki F.T."/>
            <person name="Sena J.A.D."/>
            <person name="de Souza A.A."/>
            <person name="Truffi D."/>
            <person name="Tsukumo F."/>
            <person name="Yanai G.M."/>
            <person name="Zaros L.G."/>
            <person name="Civerolo E.L."/>
            <person name="Simpson A.J.G."/>
            <person name="Almeida N.F. Jr."/>
            <person name="Setubal J.C."/>
            <person name="Kitajima J.P."/>
        </authorList>
    </citation>
    <scope>NUCLEOTIDE SEQUENCE [LARGE SCALE GENOMIC DNA]</scope>
    <source>
        <strain>Temecula1 / ATCC 700964</strain>
    </source>
</reference>
<protein>
    <recommendedName>
        <fullName evidence="1">Ribosomal RNA small subunit methyltransferase H</fullName>
        <ecNumber evidence="1">2.1.1.199</ecNumber>
    </recommendedName>
    <alternativeName>
        <fullName evidence="1">16S rRNA m(4)C1402 methyltransferase</fullName>
    </alternativeName>
    <alternativeName>
        <fullName evidence="1">rRNA (cytosine-N(4)-)-methyltransferase RsmH</fullName>
    </alternativeName>
</protein>